<sequence>MAKTTKSFLALLRGGNLGVPLVILCILAMVILPLPPALLDILFTFNIVLAVMVLLVAVSAKRPLEFSLFPTILLITTLMRLTLNVASTRVVLLHGHLGAGAAGKVIESFGQVVIGGNFVVGFVVFIILMIINFIVVTKGAERISEVSARFTLDAMPGKQMAIDADLNAGLINQAQAQTRRKDVASEADFYGAMDGASKFVRGDAIAGMMILAINLIGGVCIGIFKYNLSADAAFQQYVLMTIGDGLVAQIPSLLLSTAAAIIVTRVSDNGDIAHDVRHQLLASPSVLYTATGIMFVLAVVPGMPHLPFLLFSALLGFTGWRMSKRPQAAEAEEKSLETLTRTITETSEQQVSWETIPLIEPISLSLGYKLVALVDKAQGNPLTQRIRGVRQVISDGNGVLLPEIRIRENFRLKPSQYAIFINGIKADEADIPADKLMALPSSETYGEIDGVLGNDPAYGMPVTWIQPAQKAKALNMGYQVIDSASVIATHVNKIVRSYIPDLFNYDDITQLHNRLSSMAPRLAEDLSAALNYSQLLKVYRALLTEGVSLRDIVTIATVLVASSTLTKDHILLAADVRLALRRSITHPFVRKQELTVYTLNNELENLLTNVVNQAQQAGKVMLDSVPVDPNMLNQFQSTMPQVKEQMKAAGKAPVLLVPPQLRPLLARYARLFAPGLHVLSYNEVPDELELKIMGALS</sequence>
<accession>D3GS80</accession>
<accession>Q5DY37</accession>
<protein>
    <recommendedName>
        <fullName evidence="3">Putative flagellar export/assembly protein LfhA</fullName>
    </recommendedName>
</protein>
<gene>
    <name evidence="2" type="primary">lfhA</name>
    <name evidence="6" type="ordered locus">EC042_0245</name>
    <name evidence="5" type="ORF">Ec042-0245</name>
</gene>
<name>LFHA_ECO44</name>
<comment type="function">
    <text evidence="4">Part of the flagellar gene cluster Flag-2. However, the Flag-2 flagellar system could be inactive in strain 042 due to a frameshift in lfgC.</text>
</comment>
<comment type="subcellular location">
    <subcellularLocation>
        <location evidence="3">Cell inner membrane</location>
        <topology evidence="1">Multi-pass membrane protein</topology>
    </subcellularLocation>
</comment>
<comment type="similarity">
    <text evidence="3">Belongs to the FHIPEP (flagella/HR/invasion proteins export pore) family.</text>
</comment>
<dbReference type="EMBL" id="CR753847">
    <property type="protein sequence ID" value="CAH19113.1"/>
    <property type="molecule type" value="Genomic_DNA"/>
</dbReference>
<dbReference type="EMBL" id="FN554766">
    <property type="protein sequence ID" value="CBG33078.1"/>
    <property type="molecule type" value="Genomic_DNA"/>
</dbReference>
<dbReference type="SMR" id="D3GS80"/>
<dbReference type="KEGG" id="elo:EC042_0245"/>
<dbReference type="PATRIC" id="fig|216592.3.peg.259"/>
<dbReference type="HOGENOM" id="CLU_015346_3_0_6"/>
<dbReference type="Proteomes" id="UP000001407">
    <property type="component" value="Chromosome"/>
</dbReference>
<dbReference type="GO" id="GO:0005886">
    <property type="term" value="C:plasma membrane"/>
    <property type="evidence" value="ECO:0007669"/>
    <property type="project" value="UniProtKB-SubCell"/>
</dbReference>
<dbReference type="GO" id="GO:0044780">
    <property type="term" value="P:bacterial-type flagellum assembly"/>
    <property type="evidence" value="ECO:0007669"/>
    <property type="project" value="InterPro"/>
</dbReference>
<dbReference type="GO" id="GO:0009306">
    <property type="term" value="P:protein secretion"/>
    <property type="evidence" value="ECO:0007669"/>
    <property type="project" value="InterPro"/>
</dbReference>
<dbReference type="Gene3D" id="3.40.30.60">
    <property type="entry name" value="FHIPEP family, domain 1"/>
    <property type="match status" value="1"/>
</dbReference>
<dbReference type="Gene3D" id="1.10.8.540">
    <property type="entry name" value="FHIPEP family, domain 3"/>
    <property type="match status" value="1"/>
</dbReference>
<dbReference type="Gene3D" id="3.40.50.12790">
    <property type="entry name" value="FHIPEP family, domain 4"/>
    <property type="match status" value="1"/>
</dbReference>
<dbReference type="InterPro" id="IPR042194">
    <property type="entry name" value="FHIPEP_1"/>
</dbReference>
<dbReference type="InterPro" id="IPR042193">
    <property type="entry name" value="FHIPEP_3"/>
</dbReference>
<dbReference type="InterPro" id="IPR042196">
    <property type="entry name" value="FHIPEP_4"/>
</dbReference>
<dbReference type="InterPro" id="IPR025505">
    <property type="entry name" value="FHIPEP_CS"/>
</dbReference>
<dbReference type="InterPro" id="IPR006301">
    <property type="entry name" value="FlhA"/>
</dbReference>
<dbReference type="InterPro" id="IPR001712">
    <property type="entry name" value="T3SS_FHIPEP"/>
</dbReference>
<dbReference type="NCBIfam" id="TIGR01398">
    <property type="entry name" value="FlhA"/>
    <property type="match status" value="1"/>
</dbReference>
<dbReference type="PANTHER" id="PTHR30161:SF1">
    <property type="entry name" value="FLAGELLAR BIOSYNTHESIS PROTEIN FLHA-RELATED"/>
    <property type="match status" value="1"/>
</dbReference>
<dbReference type="PANTHER" id="PTHR30161">
    <property type="entry name" value="FLAGELLAR EXPORT PROTEIN, MEMBRANE FLHA SUBUNIT-RELATED"/>
    <property type="match status" value="1"/>
</dbReference>
<dbReference type="Pfam" id="PF00771">
    <property type="entry name" value="FHIPEP"/>
    <property type="match status" value="1"/>
</dbReference>
<dbReference type="PIRSF" id="PIRSF005419">
    <property type="entry name" value="FlhA"/>
    <property type="match status" value="1"/>
</dbReference>
<dbReference type="PRINTS" id="PR00949">
    <property type="entry name" value="TYPE3IMAPROT"/>
</dbReference>
<dbReference type="PROSITE" id="PS00994">
    <property type="entry name" value="FHIPEP"/>
    <property type="match status" value="1"/>
</dbReference>
<organism>
    <name type="scientific">Escherichia coli O44:H18 (strain 042 / EAEC)</name>
    <dbReference type="NCBI Taxonomy" id="216592"/>
    <lineage>
        <taxon>Bacteria</taxon>
        <taxon>Pseudomonadati</taxon>
        <taxon>Pseudomonadota</taxon>
        <taxon>Gammaproteobacteria</taxon>
        <taxon>Enterobacterales</taxon>
        <taxon>Enterobacteriaceae</taxon>
        <taxon>Escherichia</taxon>
    </lineage>
</organism>
<evidence type="ECO:0000255" key="1"/>
<evidence type="ECO:0000303" key="2">
    <source>
    </source>
</evidence>
<evidence type="ECO:0000305" key="3"/>
<evidence type="ECO:0000305" key="4">
    <source>
    </source>
</evidence>
<evidence type="ECO:0000312" key="5">
    <source>
        <dbReference type="EMBL" id="CAH19113.1"/>
    </source>
</evidence>
<evidence type="ECO:0000312" key="6">
    <source>
        <dbReference type="EMBL" id="CBG33078.1"/>
    </source>
</evidence>
<feature type="chain" id="PRO_0000432475" description="Putative flagellar export/assembly protein LfhA">
    <location>
        <begin position="1"/>
        <end position="697"/>
    </location>
</feature>
<feature type="transmembrane region" description="Helical" evidence="1">
    <location>
        <begin position="19"/>
        <end position="39"/>
    </location>
</feature>
<feature type="transmembrane region" description="Helical" evidence="1">
    <location>
        <begin position="40"/>
        <end position="60"/>
    </location>
</feature>
<feature type="transmembrane region" description="Helical" evidence="1">
    <location>
        <begin position="66"/>
        <end position="86"/>
    </location>
</feature>
<feature type="transmembrane region" description="Helical" evidence="1">
    <location>
        <begin position="116"/>
        <end position="136"/>
    </location>
</feature>
<feature type="transmembrane region" description="Helical" evidence="1">
    <location>
        <begin position="204"/>
        <end position="224"/>
    </location>
</feature>
<feature type="transmembrane region" description="Helical" evidence="1">
    <location>
        <begin position="242"/>
        <end position="262"/>
    </location>
</feature>
<feature type="transmembrane region" description="Helical" evidence="1">
    <location>
        <begin position="280"/>
        <end position="302"/>
    </location>
</feature>
<keyword id="KW-0997">Cell inner membrane</keyword>
<keyword id="KW-1003">Cell membrane</keyword>
<keyword id="KW-0472">Membrane</keyword>
<keyword id="KW-0812">Transmembrane</keyword>
<keyword id="KW-1133">Transmembrane helix</keyword>
<proteinExistence type="inferred from homology"/>
<reference key="1">
    <citation type="journal article" date="2005" name="J. Bacteriol.">
        <title>The Flag-2 locus, an ancestral gene cluster, is potentially associated with a novel flagellar system from Escherichia coli.</title>
        <authorList>
            <person name="Ren C.-P."/>
            <person name="Beatson S.A."/>
            <person name="Parkhill J."/>
            <person name="Pallen M.J."/>
        </authorList>
    </citation>
    <scope>NUCLEOTIDE SEQUENCE [GENOMIC DNA]</scope>
    <scope>FUNCTION</scope>
    <source>
        <strain>042 / EAEC</strain>
    </source>
</reference>
<reference key="2">
    <citation type="journal article" date="2010" name="PLoS ONE">
        <title>Complete genome sequence and comparative metabolic profiling of the prototypical enteroaggregative Escherichia coli strain 042.</title>
        <authorList>
            <person name="Chaudhuri R.R."/>
            <person name="Sebaihia M."/>
            <person name="Hobman J.L."/>
            <person name="Webber M.A."/>
            <person name="Leyton D.L."/>
            <person name="Goldberg M.D."/>
            <person name="Cunningham A.F."/>
            <person name="Scott-Tucker A."/>
            <person name="Ferguson P.R."/>
            <person name="Thomas C.M."/>
            <person name="Frankel G."/>
            <person name="Tang C.M."/>
            <person name="Dudley E.G."/>
            <person name="Roberts I.S."/>
            <person name="Rasko D.A."/>
            <person name="Pallen M.J."/>
            <person name="Parkhill J."/>
            <person name="Nataro J.P."/>
            <person name="Thomson N.R."/>
            <person name="Henderson I.R."/>
        </authorList>
    </citation>
    <scope>NUCLEOTIDE SEQUENCE [LARGE SCALE GENOMIC DNA]</scope>
    <source>
        <strain>042 / EAEC</strain>
    </source>
</reference>